<sequence length="133" mass="14638">MEYSTFGRHVAVDTWGVQFDLLNDAEFLKKEMIEAAEACGATVLSVQAKQFSPQGATVLVLLSESHLSIHTYPERGFAALDCYTCGETVDPQIAIDYLVSVLKPEKTYAKKLVRGLGELQVVEPEMKLVEAAK</sequence>
<keyword id="KW-0068">Autocatalytic cleavage</keyword>
<keyword id="KW-0210">Decarboxylase</keyword>
<keyword id="KW-0456">Lyase</keyword>
<keyword id="KW-0620">Polyamine biosynthesis</keyword>
<keyword id="KW-0670">Pyruvate</keyword>
<keyword id="KW-1185">Reference proteome</keyword>
<keyword id="KW-0949">S-adenosyl-L-methionine</keyword>
<keyword id="KW-0704">Schiff base</keyword>
<keyword id="KW-0745">Spermidine biosynthesis</keyword>
<keyword id="KW-0865">Zymogen</keyword>
<proteinExistence type="inferred from homology"/>
<dbReference type="EC" id="4.1.1.50" evidence="1"/>
<dbReference type="EMBL" id="AP008955">
    <property type="protein sequence ID" value="BAH44864.1"/>
    <property type="molecule type" value="Genomic_DNA"/>
</dbReference>
<dbReference type="SMR" id="C0ZGF5"/>
<dbReference type="STRING" id="358681.BBR47_38870"/>
<dbReference type="KEGG" id="bbe:BBR47_38870"/>
<dbReference type="eggNOG" id="COG1586">
    <property type="taxonomic scope" value="Bacteria"/>
</dbReference>
<dbReference type="HOGENOM" id="CLU_125470_2_3_9"/>
<dbReference type="UniPathway" id="UPA00331">
    <property type="reaction ID" value="UER00451"/>
</dbReference>
<dbReference type="Proteomes" id="UP000001877">
    <property type="component" value="Chromosome"/>
</dbReference>
<dbReference type="GO" id="GO:0005829">
    <property type="term" value="C:cytosol"/>
    <property type="evidence" value="ECO:0007669"/>
    <property type="project" value="TreeGrafter"/>
</dbReference>
<dbReference type="GO" id="GO:0004014">
    <property type="term" value="F:adenosylmethionine decarboxylase activity"/>
    <property type="evidence" value="ECO:0007669"/>
    <property type="project" value="UniProtKB-UniRule"/>
</dbReference>
<dbReference type="GO" id="GO:0008295">
    <property type="term" value="P:spermidine biosynthetic process"/>
    <property type="evidence" value="ECO:0007669"/>
    <property type="project" value="UniProtKB-UniRule"/>
</dbReference>
<dbReference type="FunFam" id="3.30.360.110:FF:000001">
    <property type="entry name" value="S-adenosylmethionine decarboxylase proenzyme"/>
    <property type="match status" value="1"/>
</dbReference>
<dbReference type="Gene3D" id="3.30.160.750">
    <property type="match status" value="1"/>
</dbReference>
<dbReference type="Gene3D" id="3.30.360.110">
    <property type="entry name" value="S-adenosylmethionine decarboxylase domain"/>
    <property type="match status" value="1"/>
</dbReference>
<dbReference type="HAMAP" id="MF_00464">
    <property type="entry name" value="AdoMetDC_1"/>
    <property type="match status" value="1"/>
</dbReference>
<dbReference type="InterPro" id="IPR042286">
    <property type="entry name" value="AdoMetDC_C"/>
</dbReference>
<dbReference type="InterPro" id="IPR003826">
    <property type="entry name" value="AdoMetDC_fam_prok"/>
</dbReference>
<dbReference type="InterPro" id="IPR042284">
    <property type="entry name" value="AdoMetDC_N"/>
</dbReference>
<dbReference type="InterPro" id="IPR016067">
    <property type="entry name" value="S-AdoMet_deCO2ase_core"/>
</dbReference>
<dbReference type="InterPro" id="IPR017716">
    <property type="entry name" value="S-AdoMet_deCOase_pro-enz"/>
</dbReference>
<dbReference type="NCBIfam" id="TIGR03330">
    <property type="entry name" value="SAM_DCase_Bsu"/>
    <property type="match status" value="1"/>
</dbReference>
<dbReference type="PANTHER" id="PTHR33866">
    <property type="entry name" value="S-ADENOSYLMETHIONINE DECARBOXYLASE PROENZYME"/>
    <property type="match status" value="1"/>
</dbReference>
<dbReference type="PANTHER" id="PTHR33866:SF2">
    <property type="entry name" value="S-ADENOSYLMETHIONINE DECARBOXYLASE PROENZYME"/>
    <property type="match status" value="1"/>
</dbReference>
<dbReference type="Pfam" id="PF02675">
    <property type="entry name" value="AdoMet_dc"/>
    <property type="match status" value="1"/>
</dbReference>
<dbReference type="SUPFAM" id="SSF56276">
    <property type="entry name" value="S-adenosylmethionine decarboxylase"/>
    <property type="match status" value="1"/>
</dbReference>
<gene>
    <name evidence="1" type="primary">speH</name>
    <name type="ordered locus">BBR47_38870</name>
</gene>
<evidence type="ECO:0000255" key="1">
    <source>
        <dbReference type="HAMAP-Rule" id="MF_00464"/>
    </source>
</evidence>
<reference key="1">
    <citation type="submission" date="2005-03" db="EMBL/GenBank/DDBJ databases">
        <title>Brevibacillus brevis strain 47, complete genome.</title>
        <authorList>
            <person name="Hosoyama A."/>
            <person name="Yamada R."/>
            <person name="Hongo Y."/>
            <person name="Terui Y."/>
            <person name="Ankai A."/>
            <person name="Masuyama W."/>
            <person name="Sekiguchi M."/>
            <person name="Takeda T."/>
            <person name="Asano K."/>
            <person name="Ohji S."/>
            <person name="Ichikawa N."/>
            <person name="Narita S."/>
            <person name="Aoki N."/>
            <person name="Miura H."/>
            <person name="Matsushita S."/>
            <person name="Sekigawa T."/>
            <person name="Yamagata H."/>
            <person name="Yoshikawa H."/>
            <person name="Udaka S."/>
            <person name="Tanikawa S."/>
            <person name="Fujita N."/>
        </authorList>
    </citation>
    <scope>NUCLEOTIDE SEQUENCE [LARGE SCALE GENOMIC DNA]</scope>
    <source>
        <strain>47 / JCM 6285 / NBRC 100599</strain>
    </source>
</reference>
<feature type="chain" id="PRO_1000193173" description="S-adenosylmethionine decarboxylase beta chain" evidence="1">
    <location>
        <begin position="1"/>
        <end position="64"/>
    </location>
</feature>
<feature type="chain" id="PRO_1000193174" description="S-adenosylmethionine decarboxylase alpha chain" evidence="1">
    <location>
        <begin position="65"/>
        <end position="133"/>
    </location>
</feature>
<feature type="active site" description="Schiff-base intermediate with substrate; via pyruvic acid" evidence="1">
    <location>
        <position position="65"/>
    </location>
</feature>
<feature type="active site" description="Proton acceptor; for processing activity" evidence="1">
    <location>
        <position position="70"/>
    </location>
</feature>
<feature type="active site" description="Proton donor; for catalytic activity" evidence="1">
    <location>
        <position position="85"/>
    </location>
</feature>
<feature type="site" description="Cleavage (non-hydrolytic); by autolysis" evidence="1">
    <location>
        <begin position="64"/>
        <end position="65"/>
    </location>
</feature>
<feature type="modified residue" description="Pyruvic acid (Ser); by autocatalysis" evidence="1">
    <location>
        <position position="65"/>
    </location>
</feature>
<protein>
    <recommendedName>
        <fullName evidence="1">S-adenosylmethionine decarboxylase proenzyme</fullName>
        <shortName evidence="1">AdoMetDC</shortName>
        <shortName evidence="1">SAMDC</shortName>
        <ecNumber evidence="1">4.1.1.50</ecNumber>
    </recommendedName>
    <component>
        <recommendedName>
            <fullName evidence="1">S-adenosylmethionine decarboxylase beta chain</fullName>
        </recommendedName>
    </component>
    <component>
        <recommendedName>
            <fullName evidence="1">S-adenosylmethionine decarboxylase alpha chain</fullName>
        </recommendedName>
    </component>
</protein>
<name>SPEH_BREBN</name>
<accession>C0ZGF5</accession>
<comment type="function">
    <text evidence="1">Catalyzes the decarboxylation of S-adenosylmethionine to S-adenosylmethioninamine (dcAdoMet), the propylamine donor required for the synthesis of the polyamines spermine and spermidine from the diamine putrescine.</text>
</comment>
<comment type="catalytic activity">
    <reaction evidence="1">
        <text>S-adenosyl-L-methionine + H(+) = S-adenosyl 3-(methylsulfanyl)propylamine + CO2</text>
        <dbReference type="Rhea" id="RHEA:15981"/>
        <dbReference type="ChEBI" id="CHEBI:15378"/>
        <dbReference type="ChEBI" id="CHEBI:16526"/>
        <dbReference type="ChEBI" id="CHEBI:57443"/>
        <dbReference type="ChEBI" id="CHEBI:59789"/>
        <dbReference type="EC" id="4.1.1.50"/>
    </reaction>
</comment>
<comment type="cofactor">
    <cofactor evidence="1">
        <name>pyruvate</name>
        <dbReference type="ChEBI" id="CHEBI:15361"/>
    </cofactor>
    <text evidence="1">Binds 1 pyruvoyl group covalently per subunit.</text>
</comment>
<comment type="pathway">
    <text evidence="1">Amine and polyamine biosynthesis; S-adenosylmethioninamine biosynthesis; S-adenosylmethioninamine from S-adenosyl-L-methionine: step 1/1.</text>
</comment>
<comment type="subunit">
    <text evidence="1">Heterotetramer of two alpha and two beta chains arranged as a dimer of alpha/beta heterodimers.</text>
</comment>
<comment type="PTM">
    <text evidence="1">Is synthesized initially as an inactive proenzyme. Formation of the active enzyme involves a self-maturation process in which the active site pyruvoyl group is generated from an internal serine residue via an autocatalytic post-translational modification. Two non-identical subunits are generated from the proenzyme in this reaction, and the pyruvate is formed at the N-terminus of the alpha chain, which is derived from the carboxyl end of the proenzyme. The post-translation cleavage follows an unusual pathway, termed non-hydrolytic serinolysis, in which the side chain hydroxyl group of the serine supplies its oxygen atom to form the C-terminus of the beta chain, while the remainder of the serine residue undergoes an oxidative deamination to produce ammonia and the pyruvoyl group blocking the N-terminus of the alpha chain.</text>
</comment>
<comment type="similarity">
    <text evidence="1">Belongs to the prokaryotic AdoMetDC family. Type 1 subfamily.</text>
</comment>
<organism>
    <name type="scientific">Brevibacillus brevis (strain 47 / JCM 6285 / NBRC 100599)</name>
    <dbReference type="NCBI Taxonomy" id="358681"/>
    <lineage>
        <taxon>Bacteria</taxon>
        <taxon>Bacillati</taxon>
        <taxon>Bacillota</taxon>
        <taxon>Bacilli</taxon>
        <taxon>Bacillales</taxon>
        <taxon>Paenibacillaceae</taxon>
        <taxon>Brevibacillus</taxon>
    </lineage>
</organism>